<reference key="1">
    <citation type="submission" date="2005-10" db="EMBL/GenBank/DDBJ databases">
        <title>Construction of a cDNA library from Agkistrodon acutus venom gland: identification of Agkihagin, a novel transcript for metalloproteinase.</title>
        <authorList>
            <person name="Liu Q."/>
            <person name="Hu S."/>
            <person name="Yin W."/>
            <person name="Zhang X."/>
            <person name="Su X."/>
            <person name="Li C."/>
            <person name="Qiu P."/>
            <person name="Yan G."/>
        </authorList>
    </citation>
    <scope>NUCLEOTIDE SEQUENCE [MRNA]</scope>
    <source>
        <tissue>Venom gland</tissue>
    </source>
</reference>
<protein>
    <recommendedName>
        <fullName>Zinc metalloproteinase-disintegrin-like agkihagin</fullName>
        <ecNumber>3.4.24.-</ecNumber>
    </recommendedName>
    <alternativeName>
        <fullName>Snake venom metalloproteinase</fullName>
        <shortName>SVMP</shortName>
    </alternativeName>
</protein>
<accession>Q1PS45</accession>
<feature type="signal peptide" evidence="2">
    <location>
        <begin position="1"/>
        <end position="20"/>
    </location>
</feature>
<feature type="propeptide" id="PRO_0000340297" evidence="1">
    <location>
        <begin position="21"/>
        <end position="189"/>
    </location>
</feature>
<feature type="chain" id="PRO_0000340298" description="Zinc metalloproteinase-disintegrin-like agkihagin">
    <location>
        <begin position="190"/>
        <end position="608"/>
    </location>
</feature>
<feature type="domain" description="Peptidase M12B" evidence="4">
    <location>
        <begin position="199"/>
        <end position="395"/>
    </location>
</feature>
<feature type="domain" description="Disintegrin" evidence="3">
    <location>
        <begin position="403"/>
        <end position="488"/>
    </location>
</feature>
<feature type="short sequence motif" description="D/ECD-tripeptide">
    <location>
        <begin position="467"/>
        <end position="469"/>
    </location>
</feature>
<feature type="active site" evidence="4 5">
    <location>
        <position position="336"/>
    </location>
</feature>
<feature type="binding site" evidence="1">
    <location>
        <position position="335"/>
    </location>
    <ligand>
        <name>Zn(2+)</name>
        <dbReference type="ChEBI" id="CHEBI:29105"/>
        <note>catalytic</note>
    </ligand>
</feature>
<feature type="binding site" evidence="1">
    <location>
        <position position="339"/>
    </location>
    <ligand>
        <name>Zn(2+)</name>
        <dbReference type="ChEBI" id="CHEBI:29105"/>
        <note>catalytic</note>
    </ligand>
</feature>
<feature type="binding site" evidence="1">
    <location>
        <position position="345"/>
    </location>
    <ligand>
        <name>Zn(2+)</name>
        <dbReference type="ChEBI" id="CHEBI:29105"/>
        <note>catalytic</note>
    </ligand>
</feature>
<feature type="binding site" evidence="1">
    <location>
        <position position="405"/>
    </location>
    <ligand>
        <name>Ca(2+)</name>
        <dbReference type="ChEBI" id="CHEBI:29108"/>
        <label>1</label>
    </ligand>
</feature>
<feature type="binding site" evidence="1">
    <location>
        <position position="408"/>
    </location>
    <ligand>
        <name>Ca(2+)</name>
        <dbReference type="ChEBI" id="CHEBI:29108"/>
        <label>1</label>
    </ligand>
</feature>
<feature type="binding site" evidence="1">
    <location>
        <position position="410"/>
    </location>
    <ligand>
        <name>Ca(2+)</name>
        <dbReference type="ChEBI" id="CHEBI:29108"/>
        <label>1</label>
    </ligand>
</feature>
<feature type="binding site" evidence="1">
    <location>
        <position position="412"/>
    </location>
    <ligand>
        <name>Ca(2+)</name>
        <dbReference type="ChEBI" id="CHEBI:29108"/>
        <label>1</label>
    </ligand>
</feature>
<feature type="binding site" evidence="1">
    <location>
        <position position="415"/>
    </location>
    <ligand>
        <name>Ca(2+)</name>
        <dbReference type="ChEBI" id="CHEBI:29108"/>
        <label>1</label>
    </ligand>
</feature>
<feature type="binding site" evidence="1">
    <location>
        <position position="418"/>
    </location>
    <ligand>
        <name>Ca(2+)</name>
        <dbReference type="ChEBI" id="CHEBI:29108"/>
        <label>1</label>
    </ligand>
</feature>
<feature type="binding site" evidence="1">
    <location>
        <position position="469"/>
    </location>
    <ligand>
        <name>Ca(2+)</name>
        <dbReference type="ChEBI" id="CHEBI:29108"/>
        <label>2</label>
    </ligand>
</feature>
<feature type="binding site" evidence="1">
    <location>
        <position position="470"/>
    </location>
    <ligand>
        <name>Ca(2+)</name>
        <dbReference type="ChEBI" id="CHEBI:29108"/>
        <label>2</label>
    </ligand>
</feature>
<feature type="binding site" evidence="1">
    <location>
        <position position="472"/>
    </location>
    <ligand>
        <name>Ca(2+)</name>
        <dbReference type="ChEBI" id="CHEBI:29108"/>
        <label>2</label>
    </ligand>
</feature>
<feature type="binding site" evidence="1">
    <location>
        <position position="483"/>
    </location>
    <ligand>
        <name>Ca(2+)</name>
        <dbReference type="ChEBI" id="CHEBI:29108"/>
        <label>2</label>
    </ligand>
</feature>
<feature type="binding site" evidence="1">
    <location>
        <position position="484"/>
    </location>
    <ligand>
        <name>Ca(2+)</name>
        <dbReference type="ChEBI" id="CHEBI:29108"/>
        <label>2</label>
    </ligand>
</feature>
<feature type="glycosylation site" description="N-linked (GlcNAc...) asparagine" evidence="2">
    <location>
        <position position="501"/>
    </location>
</feature>
<feature type="disulfide bond" evidence="1">
    <location>
        <begin position="310"/>
        <end position="390"/>
    </location>
</feature>
<feature type="disulfide bond" evidence="1">
    <location>
        <begin position="350"/>
        <end position="374"/>
    </location>
</feature>
<feature type="disulfide bond" evidence="1">
    <location>
        <begin position="352"/>
        <end position="357"/>
    </location>
</feature>
<feature type="disulfide bond" description="Interchain (with C-365)" evidence="3 4">
    <location>
        <position position="365"/>
    </location>
</feature>
<feature type="disulfide bond" evidence="1">
    <location>
        <begin position="406"/>
        <end position="435"/>
    </location>
</feature>
<feature type="disulfide bond" evidence="1">
    <location>
        <begin position="417"/>
        <end position="430"/>
    </location>
</feature>
<feature type="disulfide bond" evidence="1">
    <location>
        <begin position="419"/>
        <end position="425"/>
    </location>
</feature>
<feature type="disulfide bond" evidence="1">
    <location>
        <begin position="429"/>
        <end position="452"/>
    </location>
</feature>
<feature type="disulfide bond" evidence="1">
    <location>
        <begin position="443"/>
        <end position="449"/>
    </location>
</feature>
<feature type="disulfide bond" evidence="1">
    <location>
        <begin position="448"/>
        <end position="474"/>
    </location>
</feature>
<feature type="disulfide bond" evidence="1">
    <location>
        <begin position="461"/>
        <end position="481"/>
    </location>
</feature>
<feature type="disulfide bond" evidence="1">
    <location>
        <begin position="468"/>
        <end position="499"/>
    </location>
</feature>
<feature type="disulfide bond" evidence="1">
    <location>
        <begin position="492"/>
        <end position="504"/>
    </location>
</feature>
<feature type="disulfide bond" evidence="1">
    <location>
        <begin position="511"/>
        <end position="561"/>
    </location>
</feature>
<feature type="disulfide bond" evidence="1">
    <location>
        <begin position="526"/>
        <end position="570"/>
    </location>
</feature>
<feature type="disulfide bond" evidence="1">
    <location>
        <begin position="539"/>
        <end position="549"/>
    </location>
</feature>
<feature type="disulfide bond" evidence="1">
    <location>
        <begin position="556"/>
        <end position="596"/>
    </location>
</feature>
<feature type="disulfide bond" evidence="1">
    <location>
        <begin position="590"/>
        <end position="601"/>
    </location>
</feature>
<sequence length="608" mass="67573">MIQVLLVTICLAAFPYQGSSIILESGNVNDYEVVYPRKVTALPEGAVQQKYEDAMQYEFKVNGEPVVLHLEKNKGLFSEDYSETHYSPDGREITTYPSVEDHCYYHGRIQNDADLTASISACNGLKGHFMLQGEMYLIEPLKLSDSEAHAVFKYENVEKEDEAPKMCGVTQNWKSYEPIKKASQSNLTPEQQRYLNAPKFVKLFLVADNIMYLKYGRSLTNVRTRMYDMANILNLIFRRMNIHVAVTDLEIWSDKDKIIVQPSADDTLKSFATWRESVLLKHKSHDNAQLLTGINFNGPTAGLAYLGGICDPMYSTAIVQDHNKIHHLVAIAMAHEMGHNLGIDHDKDTCTCAAKSCVMAGTLSCEASYLFSDCSRKEHRAFLIKNMPQCILKKPSKTDVVSPPVCGNYFVEMGEDCDCGSPATCRDPCCDAATCKLKQGAQCAEGLCCDQCRFKGAGTQCRAAMDECDMADLCTGQSADCTDRFQKNGQPCQNNNGYCYNGTCPTMIKQCTVFFGSNAAVSQDACFQFNLQGNNYGYCRKEQNTKIACEPQNVKCGRLYCTSPEKQNPCNIYYSPSNEDKGMVLPGTKCADGKACSNGQCVDVTTPY</sequence>
<comment type="function">
    <text evidence="1">Strongly inhibits the collagen-induced human platelet aggregation. Hydrolyzes the Aalpha-chain of fibrinogen (FGA), without cleavage of Bbeta- and gamma-chains. Induces apoptosis and strongly inhibits proliferation of endothelial cells as well as adhesion of the cells to extracellular matrix proteins (By similarity).</text>
</comment>
<comment type="cofactor">
    <cofactor evidence="1">
        <name>Zn(2+)</name>
        <dbReference type="ChEBI" id="CHEBI:29105"/>
    </cofactor>
    <text evidence="1">Binds 1 zinc ion per subunit.</text>
</comment>
<comment type="activity regulation">
    <text evidence="1">Inhibited by EDTA and EGTA. Not inhibited by PMSF, antipain, pepstatin, and iodoacetamide (By similarity).</text>
</comment>
<comment type="subunit">
    <text evidence="1">Homodimer; disulfide-linked.</text>
</comment>
<comment type="subcellular location">
    <subcellularLocation>
        <location evidence="1">Secreted</location>
    </subcellularLocation>
</comment>
<comment type="tissue specificity">
    <text>Expressed by the venom gland.</text>
</comment>
<comment type="similarity">
    <text evidence="6">Belongs to the venom metalloproteinase (M12B) family. P-III subfamily. P-IIIc sub-subfamily.</text>
</comment>
<name>VM3AK_DEIAC</name>
<organism>
    <name type="scientific">Deinagkistrodon acutus</name>
    <name type="common">Hundred-pace snake</name>
    <name type="synonym">Agkistrodon acutus</name>
    <dbReference type="NCBI Taxonomy" id="36307"/>
    <lineage>
        <taxon>Eukaryota</taxon>
        <taxon>Metazoa</taxon>
        <taxon>Chordata</taxon>
        <taxon>Craniata</taxon>
        <taxon>Vertebrata</taxon>
        <taxon>Euteleostomi</taxon>
        <taxon>Lepidosauria</taxon>
        <taxon>Squamata</taxon>
        <taxon>Bifurcata</taxon>
        <taxon>Unidentata</taxon>
        <taxon>Episquamata</taxon>
        <taxon>Toxicofera</taxon>
        <taxon>Serpentes</taxon>
        <taxon>Colubroidea</taxon>
        <taxon>Viperidae</taxon>
        <taxon>Crotalinae</taxon>
        <taxon>Deinagkistrodon</taxon>
    </lineage>
</organism>
<dbReference type="EC" id="3.4.24.-"/>
<dbReference type="EMBL" id="DQ263750">
    <property type="protein sequence ID" value="ABB79955.1"/>
    <property type="molecule type" value="mRNA"/>
</dbReference>
<dbReference type="SMR" id="Q1PS45"/>
<dbReference type="MEROPS" id="M12.315"/>
<dbReference type="GO" id="GO:0005576">
    <property type="term" value="C:extracellular region"/>
    <property type="evidence" value="ECO:0007669"/>
    <property type="project" value="UniProtKB-SubCell"/>
</dbReference>
<dbReference type="GO" id="GO:0005886">
    <property type="term" value="C:plasma membrane"/>
    <property type="evidence" value="ECO:0007669"/>
    <property type="project" value="TreeGrafter"/>
</dbReference>
<dbReference type="GO" id="GO:0046872">
    <property type="term" value="F:metal ion binding"/>
    <property type="evidence" value="ECO:0007669"/>
    <property type="project" value="UniProtKB-KW"/>
</dbReference>
<dbReference type="GO" id="GO:0004222">
    <property type="term" value="F:metalloendopeptidase activity"/>
    <property type="evidence" value="ECO:0007669"/>
    <property type="project" value="InterPro"/>
</dbReference>
<dbReference type="GO" id="GO:0090729">
    <property type="term" value="F:toxin activity"/>
    <property type="evidence" value="ECO:0007669"/>
    <property type="project" value="UniProtKB-KW"/>
</dbReference>
<dbReference type="GO" id="GO:0006915">
    <property type="term" value="P:apoptotic process"/>
    <property type="evidence" value="ECO:0007669"/>
    <property type="project" value="UniProtKB-KW"/>
</dbReference>
<dbReference type="GO" id="GO:0006508">
    <property type="term" value="P:proteolysis"/>
    <property type="evidence" value="ECO:0007669"/>
    <property type="project" value="UniProtKB-KW"/>
</dbReference>
<dbReference type="CDD" id="cd04269">
    <property type="entry name" value="ZnMc_adamalysin_II_like"/>
    <property type="match status" value="1"/>
</dbReference>
<dbReference type="FunFam" id="3.40.390.10:FF:000002">
    <property type="entry name" value="Disintegrin and metalloproteinase domain-containing protein 22"/>
    <property type="match status" value="1"/>
</dbReference>
<dbReference type="FunFam" id="4.10.70.10:FF:000001">
    <property type="entry name" value="Disintegrin and metalloproteinase domain-containing protein 22"/>
    <property type="match status" value="1"/>
</dbReference>
<dbReference type="Gene3D" id="3.40.390.10">
    <property type="entry name" value="Collagenase (Catalytic Domain)"/>
    <property type="match status" value="1"/>
</dbReference>
<dbReference type="Gene3D" id="4.10.70.10">
    <property type="entry name" value="Disintegrin domain"/>
    <property type="match status" value="1"/>
</dbReference>
<dbReference type="InterPro" id="IPR006586">
    <property type="entry name" value="ADAM_Cys-rich"/>
</dbReference>
<dbReference type="InterPro" id="IPR018358">
    <property type="entry name" value="Disintegrin_CS"/>
</dbReference>
<dbReference type="InterPro" id="IPR001762">
    <property type="entry name" value="Disintegrin_dom"/>
</dbReference>
<dbReference type="InterPro" id="IPR036436">
    <property type="entry name" value="Disintegrin_dom_sf"/>
</dbReference>
<dbReference type="InterPro" id="IPR024079">
    <property type="entry name" value="MetalloPept_cat_dom_sf"/>
</dbReference>
<dbReference type="InterPro" id="IPR001590">
    <property type="entry name" value="Peptidase_M12B"/>
</dbReference>
<dbReference type="InterPro" id="IPR002870">
    <property type="entry name" value="Peptidase_M12B_N"/>
</dbReference>
<dbReference type="InterPro" id="IPR034027">
    <property type="entry name" value="Reprolysin_adamalysin"/>
</dbReference>
<dbReference type="PANTHER" id="PTHR11905">
    <property type="entry name" value="ADAM A DISINTEGRIN AND METALLOPROTEASE DOMAIN"/>
    <property type="match status" value="1"/>
</dbReference>
<dbReference type="PANTHER" id="PTHR11905:SF32">
    <property type="entry name" value="DISINTEGRIN AND METALLOPROTEINASE DOMAIN-CONTAINING PROTEIN 28"/>
    <property type="match status" value="1"/>
</dbReference>
<dbReference type="Pfam" id="PF08516">
    <property type="entry name" value="ADAM_CR"/>
    <property type="match status" value="1"/>
</dbReference>
<dbReference type="Pfam" id="PF00200">
    <property type="entry name" value="Disintegrin"/>
    <property type="match status" value="1"/>
</dbReference>
<dbReference type="Pfam" id="PF01562">
    <property type="entry name" value="Pep_M12B_propep"/>
    <property type="match status" value="1"/>
</dbReference>
<dbReference type="Pfam" id="PF01421">
    <property type="entry name" value="Reprolysin"/>
    <property type="match status" value="1"/>
</dbReference>
<dbReference type="PRINTS" id="PR00289">
    <property type="entry name" value="DISINTEGRIN"/>
</dbReference>
<dbReference type="SMART" id="SM00608">
    <property type="entry name" value="ACR"/>
    <property type="match status" value="1"/>
</dbReference>
<dbReference type="SMART" id="SM00050">
    <property type="entry name" value="DISIN"/>
    <property type="match status" value="1"/>
</dbReference>
<dbReference type="SUPFAM" id="SSF57552">
    <property type="entry name" value="Blood coagulation inhibitor (disintegrin)"/>
    <property type="match status" value="1"/>
</dbReference>
<dbReference type="SUPFAM" id="SSF55486">
    <property type="entry name" value="Metalloproteases ('zincins'), catalytic domain"/>
    <property type="match status" value="1"/>
</dbReference>
<dbReference type="PROSITE" id="PS50215">
    <property type="entry name" value="ADAM_MEPRO"/>
    <property type="match status" value="1"/>
</dbReference>
<dbReference type="PROSITE" id="PS00427">
    <property type="entry name" value="DISINTEGRIN_1"/>
    <property type="match status" value="1"/>
</dbReference>
<dbReference type="PROSITE" id="PS50214">
    <property type="entry name" value="DISINTEGRIN_2"/>
    <property type="match status" value="1"/>
</dbReference>
<dbReference type="PROSITE" id="PS00142">
    <property type="entry name" value="ZINC_PROTEASE"/>
    <property type="match status" value="1"/>
</dbReference>
<proteinExistence type="evidence at transcript level"/>
<evidence type="ECO:0000250" key="1"/>
<evidence type="ECO:0000255" key="2"/>
<evidence type="ECO:0000255" key="3">
    <source>
        <dbReference type="PROSITE-ProRule" id="PRU00068"/>
    </source>
</evidence>
<evidence type="ECO:0000255" key="4">
    <source>
        <dbReference type="PROSITE-ProRule" id="PRU00276"/>
    </source>
</evidence>
<evidence type="ECO:0000255" key="5">
    <source>
        <dbReference type="PROSITE-ProRule" id="PRU10095"/>
    </source>
</evidence>
<evidence type="ECO:0000305" key="6"/>
<keyword id="KW-0053">Apoptosis</keyword>
<keyword id="KW-0106">Calcium</keyword>
<keyword id="KW-1217">Cell adhesion impairing toxin</keyword>
<keyword id="KW-1015">Disulfide bond</keyword>
<keyword id="KW-0325">Glycoprotein</keyword>
<keyword id="KW-1199">Hemostasis impairing toxin</keyword>
<keyword id="KW-0378">Hydrolase</keyword>
<keyword id="KW-0479">Metal-binding</keyword>
<keyword id="KW-0482">Metalloprotease</keyword>
<keyword id="KW-1201">Platelet aggregation inhibiting toxin</keyword>
<keyword id="KW-0645">Protease</keyword>
<keyword id="KW-0964">Secreted</keyword>
<keyword id="KW-0732">Signal</keyword>
<keyword id="KW-0800">Toxin</keyword>
<keyword id="KW-0862">Zinc</keyword>
<keyword id="KW-0865">Zymogen</keyword>